<name>PSD_BURP0</name>
<feature type="chain" id="PRO_1000026640" description="Phosphatidylserine decarboxylase beta chain" evidence="1">
    <location>
        <begin position="1"/>
        <end position="181"/>
    </location>
</feature>
<feature type="chain" id="PRO_1000026641" description="Phosphatidylserine decarboxylase alpha chain" evidence="1">
    <location>
        <begin position="182"/>
        <end position="216"/>
    </location>
</feature>
<feature type="active site" description="Schiff-base intermediate with substrate; via pyruvic acid" evidence="1">
    <location>
        <position position="182"/>
    </location>
</feature>
<feature type="site" description="Cleavage (non-hydrolytic); by autocatalysis" evidence="1">
    <location>
        <begin position="181"/>
        <end position="182"/>
    </location>
</feature>
<feature type="modified residue" description="Pyruvic acid (Ser); by autocatalysis" evidence="1">
    <location>
        <position position="182"/>
    </location>
</feature>
<evidence type="ECO:0000255" key="1">
    <source>
        <dbReference type="HAMAP-Rule" id="MF_00664"/>
    </source>
</evidence>
<organism>
    <name type="scientific">Burkholderia pseudomallei (strain 1106a)</name>
    <dbReference type="NCBI Taxonomy" id="357348"/>
    <lineage>
        <taxon>Bacteria</taxon>
        <taxon>Pseudomonadati</taxon>
        <taxon>Pseudomonadota</taxon>
        <taxon>Betaproteobacteria</taxon>
        <taxon>Burkholderiales</taxon>
        <taxon>Burkholderiaceae</taxon>
        <taxon>Burkholderia</taxon>
        <taxon>pseudomallei group</taxon>
    </lineage>
</organism>
<proteinExistence type="inferred from homology"/>
<reference key="1">
    <citation type="journal article" date="2010" name="Genome Biol. Evol.">
        <title>Continuing evolution of Burkholderia mallei through genome reduction and large-scale rearrangements.</title>
        <authorList>
            <person name="Losada L."/>
            <person name="Ronning C.M."/>
            <person name="DeShazer D."/>
            <person name="Woods D."/>
            <person name="Fedorova N."/>
            <person name="Kim H.S."/>
            <person name="Shabalina S.A."/>
            <person name="Pearson T.R."/>
            <person name="Brinkac L."/>
            <person name="Tan P."/>
            <person name="Nandi T."/>
            <person name="Crabtree J."/>
            <person name="Badger J."/>
            <person name="Beckstrom-Sternberg S."/>
            <person name="Saqib M."/>
            <person name="Schutzer S.E."/>
            <person name="Keim P."/>
            <person name="Nierman W.C."/>
        </authorList>
    </citation>
    <scope>NUCLEOTIDE SEQUENCE [LARGE SCALE GENOMIC DNA]</scope>
    <source>
        <strain>1106a</strain>
    </source>
</reference>
<protein>
    <recommendedName>
        <fullName evidence="1">Phosphatidylserine decarboxylase proenzyme</fullName>
        <ecNumber evidence="1">4.1.1.65</ecNumber>
    </recommendedName>
    <component>
        <recommendedName>
            <fullName evidence="1">Phosphatidylserine decarboxylase alpha chain</fullName>
        </recommendedName>
    </component>
    <component>
        <recommendedName>
            <fullName evidence="1">Phosphatidylserine decarboxylase beta chain</fullName>
        </recommendedName>
    </component>
</protein>
<comment type="function">
    <text evidence="1">Catalyzes the formation of phosphatidylethanolamine (PtdEtn) from phosphatidylserine (PtdSer).</text>
</comment>
<comment type="catalytic activity">
    <reaction evidence="1">
        <text>a 1,2-diacyl-sn-glycero-3-phospho-L-serine + H(+) = a 1,2-diacyl-sn-glycero-3-phosphoethanolamine + CO2</text>
        <dbReference type="Rhea" id="RHEA:20828"/>
        <dbReference type="ChEBI" id="CHEBI:15378"/>
        <dbReference type="ChEBI" id="CHEBI:16526"/>
        <dbReference type="ChEBI" id="CHEBI:57262"/>
        <dbReference type="ChEBI" id="CHEBI:64612"/>
        <dbReference type="EC" id="4.1.1.65"/>
    </reaction>
</comment>
<comment type="cofactor">
    <cofactor evidence="1">
        <name>pyruvate</name>
        <dbReference type="ChEBI" id="CHEBI:15361"/>
    </cofactor>
    <text evidence="1">Binds 1 pyruvoyl group covalently per subunit.</text>
</comment>
<comment type="pathway">
    <text evidence="1">Phospholipid metabolism; phosphatidylethanolamine biosynthesis; phosphatidylethanolamine from CDP-diacylglycerol: step 2/2.</text>
</comment>
<comment type="subunit">
    <text evidence="1">Heterodimer of a large membrane-associated beta subunit and a small pyruvoyl-containing alpha subunit.</text>
</comment>
<comment type="subcellular location">
    <subcellularLocation>
        <location evidence="1">Cell membrane</location>
        <topology evidence="1">Peripheral membrane protein</topology>
    </subcellularLocation>
</comment>
<comment type="PTM">
    <text evidence="1">Is synthesized initially as an inactive proenzyme. Formation of the active enzyme involves a self-maturation process in which the active site pyruvoyl group is generated from an internal serine residue via an autocatalytic post-translational modification. Two non-identical subunits are generated from the proenzyme in this reaction, and the pyruvate is formed at the N-terminus of the alpha chain, which is derived from the carboxyl end of the proenzyme. The post-translation cleavage follows an unusual pathway, termed non-hydrolytic serinolysis, in which the side chain hydroxyl group of the serine supplies its oxygen atom to form the C-terminus of the beta chain, while the remainder of the serine residue undergoes an oxidative deamination to produce ammonia and the pyruvoyl prosthetic group on the alpha chain.</text>
</comment>
<comment type="similarity">
    <text evidence="1">Belongs to the phosphatidylserine decarboxylase family. PSD-A subfamily.</text>
</comment>
<dbReference type="EC" id="4.1.1.65" evidence="1"/>
<dbReference type="EMBL" id="CP000572">
    <property type="protein sequence ID" value="ABN90393.1"/>
    <property type="molecule type" value="Genomic_DNA"/>
</dbReference>
<dbReference type="RefSeq" id="WP_004531897.1">
    <property type="nucleotide sequence ID" value="NC_009076.1"/>
</dbReference>
<dbReference type="KEGG" id="bpl:BURPS1106A_1284"/>
<dbReference type="HOGENOM" id="CLU_072492_0_0_4"/>
<dbReference type="UniPathway" id="UPA00558">
    <property type="reaction ID" value="UER00616"/>
</dbReference>
<dbReference type="Proteomes" id="UP000006738">
    <property type="component" value="Chromosome I"/>
</dbReference>
<dbReference type="GO" id="GO:0005886">
    <property type="term" value="C:plasma membrane"/>
    <property type="evidence" value="ECO:0007669"/>
    <property type="project" value="UniProtKB-SubCell"/>
</dbReference>
<dbReference type="GO" id="GO:0004609">
    <property type="term" value="F:phosphatidylserine decarboxylase activity"/>
    <property type="evidence" value="ECO:0007669"/>
    <property type="project" value="UniProtKB-UniRule"/>
</dbReference>
<dbReference type="GO" id="GO:0006646">
    <property type="term" value="P:phosphatidylethanolamine biosynthetic process"/>
    <property type="evidence" value="ECO:0007669"/>
    <property type="project" value="UniProtKB-UniRule"/>
</dbReference>
<dbReference type="HAMAP" id="MF_00664">
    <property type="entry name" value="PS_decarb_PSD_A"/>
    <property type="match status" value="1"/>
</dbReference>
<dbReference type="InterPro" id="IPR003817">
    <property type="entry name" value="PS_Dcarbxylase"/>
</dbReference>
<dbReference type="InterPro" id="IPR033175">
    <property type="entry name" value="PSD-A"/>
</dbReference>
<dbReference type="NCBIfam" id="TIGR00164">
    <property type="entry name" value="AS_decarb"/>
    <property type="match status" value="1"/>
</dbReference>
<dbReference type="NCBIfam" id="NF003678">
    <property type="entry name" value="PRK05305.1-2"/>
    <property type="match status" value="1"/>
</dbReference>
<dbReference type="NCBIfam" id="NF003680">
    <property type="entry name" value="PRK05305.1-5"/>
    <property type="match status" value="1"/>
</dbReference>
<dbReference type="NCBIfam" id="NF003685">
    <property type="entry name" value="PRK05305.2-5"/>
    <property type="match status" value="1"/>
</dbReference>
<dbReference type="PANTHER" id="PTHR35809">
    <property type="entry name" value="ARCHAETIDYLSERINE DECARBOXYLASE PROENZYME-RELATED"/>
    <property type="match status" value="1"/>
</dbReference>
<dbReference type="PANTHER" id="PTHR35809:SF1">
    <property type="entry name" value="ARCHAETIDYLSERINE DECARBOXYLASE PROENZYME-RELATED"/>
    <property type="match status" value="1"/>
</dbReference>
<dbReference type="Pfam" id="PF02666">
    <property type="entry name" value="PS_Dcarbxylase"/>
    <property type="match status" value="1"/>
</dbReference>
<sequence>MNYPHPIIAREGWPFIAIAAVVALLIHAVGGFGLAWPFWLLLVFVVQFFRDPPRAIPTQANAVLCPADGRIVAVETAHDPYADREALKISVFMNVFNVHSQRSPVDGAVQKVEYFPGAFLNAALDKASAENERNAVVIQTGAGHTVTAVQIAGLVARRILCYVRAGEPLSRGQRYGFIRFGSRVDVYLPKGSRARVSIGEKVSASSTILAELPEQP</sequence>
<keyword id="KW-1003">Cell membrane</keyword>
<keyword id="KW-0210">Decarboxylase</keyword>
<keyword id="KW-0444">Lipid biosynthesis</keyword>
<keyword id="KW-0443">Lipid metabolism</keyword>
<keyword id="KW-0456">Lyase</keyword>
<keyword id="KW-0472">Membrane</keyword>
<keyword id="KW-0594">Phospholipid biosynthesis</keyword>
<keyword id="KW-1208">Phospholipid metabolism</keyword>
<keyword id="KW-0670">Pyruvate</keyword>
<keyword id="KW-0865">Zymogen</keyword>
<gene>
    <name evidence="1" type="primary">psd</name>
    <name type="ordered locus">BURPS1106A_1284</name>
</gene>
<accession>A3NT92</accession>